<protein>
    <recommendedName>
        <fullName>Transport and Golgi organization protein 11</fullName>
        <shortName>Tango-11</shortName>
    </recommendedName>
</protein>
<organism>
    <name type="scientific">Drosophila melanogaster</name>
    <name type="common">Fruit fly</name>
    <dbReference type="NCBI Taxonomy" id="7227"/>
    <lineage>
        <taxon>Eukaryota</taxon>
        <taxon>Metazoa</taxon>
        <taxon>Ecdysozoa</taxon>
        <taxon>Arthropoda</taxon>
        <taxon>Hexapoda</taxon>
        <taxon>Insecta</taxon>
        <taxon>Pterygota</taxon>
        <taxon>Neoptera</taxon>
        <taxon>Endopterygota</taxon>
        <taxon>Diptera</taxon>
        <taxon>Brachycera</taxon>
        <taxon>Muscomorpha</taxon>
        <taxon>Ephydroidea</taxon>
        <taxon>Drosophilidae</taxon>
        <taxon>Drosophila</taxon>
        <taxon>Sophophora</taxon>
    </lineage>
</organism>
<keyword id="KW-0175">Coiled coil</keyword>
<keyword id="KW-0256">Endoplasmic reticulum</keyword>
<keyword id="KW-0472">Membrane</keyword>
<keyword id="KW-0496">Mitochondrion</keyword>
<keyword id="KW-1000">Mitochondrion outer membrane</keyword>
<keyword id="KW-0576">Peroxisome</keyword>
<keyword id="KW-0597">Phosphoprotein</keyword>
<keyword id="KW-1185">Reference proteome</keyword>
<keyword id="KW-0812">Transmembrane</keyword>
<keyword id="KW-1133">Transmembrane helix</keyword>
<evidence type="ECO:0000250" key="1"/>
<evidence type="ECO:0000255" key="2"/>
<evidence type="ECO:0000256" key="3">
    <source>
        <dbReference type="SAM" id="MobiDB-lite"/>
    </source>
</evidence>
<evidence type="ECO:0000269" key="4">
    <source>
    </source>
</evidence>
<evidence type="ECO:0000269" key="5">
    <source>
    </source>
</evidence>
<evidence type="ECO:0000305" key="6"/>
<gene>
    <name type="primary">Tango11</name>
    <name type="ORF">CG30404</name>
</gene>
<name>TNG11_DROME</name>
<accession>Q961C9</accession>
<dbReference type="EMBL" id="AE013599">
    <property type="protein sequence ID" value="AAM71012.1"/>
    <property type="molecule type" value="Genomic_DNA"/>
</dbReference>
<dbReference type="EMBL" id="AY051672">
    <property type="protein sequence ID" value="AAK93096.1"/>
    <property type="molecule type" value="mRNA"/>
</dbReference>
<dbReference type="RefSeq" id="NP_726111.1">
    <property type="nucleotide sequence ID" value="NM_166481.3"/>
</dbReference>
<dbReference type="RefSeq" id="NP_726112.1">
    <property type="nucleotide sequence ID" value="NM_166482.2"/>
</dbReference>
<dbReference type="SMR" id="Q961C9"/>
<dbReference type="BioGRID" id="73152">
    <property type="interactions" value="12"/>
</dbReference>
<dbReference type="FunCoup" id="Q961C9">
    <property type="interactions" value="1829"/>
</dbReference>
<dbReference type="IntAct" id="Q961C9">
    <property type="interactions" value="3"/>
</dbReference>
<dbReference type="STRING" id="7227.FBpp0071661"/>
<dbReference type="GlyGen" id="Q961C9">
    <property type="glycosylation" value="1 site"/>
</dbReference>
<dbReference type="iPTMnet" id="Q961C9"/>
<dbReference type="PaxDb" id="7227-FBpp0071660"/>
<dbReference type="DNASU" id="246596"/>
<dbReference type="EnsemblMetazoa" id="FBtr0071746">
    <property type="protein sequence ID" value="FBpp0071660"/>
    <property type="gene ID" value="FBgn0050404"/>
</dbReference>
<dbReference type="EnsemblMetazoa" id="FBtr0071747">
    <property type="protein sequence ID" value="FBpp0071661"/>
    <property type="gene ID" value="FBgn0050404"/>
</dbReference>
<dbReference type="GeneID" id="246596"/>
<dbReference type="KEGG" id="dme:Dmel_CG30404"/>
<dbReference type="AGR" id="FB:FBgn0050404"/>
<dbReference type="CTD" id="246596"/>
<dbReference type="FlyBase" id="FBgn0050404">
    <property type="gene designation" value="Tango11"/>
</dbReference>
<dbReference type="VEuPathDB" id="VectorBase:FBgn0050404"/>
<dbReference type="eggNOG" id="ENOG502R96B">
    <property type="taxonomic scope" value="Eukaryota"/>
</dbReference>
<dbReference type="GeneTree" id="ENSGT00390000009776"/>
<dbReference type="HOGENOM" id="CLU_085498_0_0_1"/>
<dbReference type="InParanoid" id="Q961C9"/>
<dbReference type="OMA" id="FKTFMWL"/>
<dbReference type="OrthoDB" id="5986838at2759"/>
<dbReference type="PhylomeDB" id="Q961C9"/>
<dbReference type="BioGRID-ORCS" id="246596">
    <property type="hits" value="0 hits in 1 CRISPR screen"/>
</dbReference>
<dbReference type="GenomeRNAi" id="246596"/>
<dbReference type="PRO" id="PR:Q961C9"/>
<dbReference type="Proteomes" id="UP000000803">
    <property type="component" value="Chromosome 2R"/>
</dbReference>
<dbReference type="Bgee" id="FBgn0050404">
    <property type="expression patterns" value="Expressed in cleaving embryo and 183 other cell types or tissues"/>
</dbReference>
<dbReference type="ExpressionAtlas" id="Q961C9">
    <property type="expression patterns" value="baseline and differential"/>
</dbReference>
<dbReference type="GO" id="GO:0005737">
    <property type="term" value="C:cytoplasm"/>
    <property type="evidence" value="ECO:0007005"/>
    <property type="project" value="FlyBase"/>
</dbReference>
<dbReference type="GO" id="GO:0005783">
    <property type="term" value="C:endoplasmic reticulum"/>
    <property type="evidence" value="ECO:0000314"/>
    <property type="project" value="FlyBase"/>
</dbReference>
<dbReference type="GO" id="GO:0005789">
    <property type="term" value="C:endoplasmic reticulum membrane"/>
    <property type="evidence" value="ECO:0000314"/>
    <property type="project" value="UniProtKB"/>
</dbReference>
<dbReference type="GO" id="GO:0005741">
    <property type="term" value="C:mitochondrial outer membrane"/>
    <property type="evidence" value="ECO:0000250"/>
    <property type="project" value="FlyBase"/>
</dbReference>
<dbReference type="GO" id="GO:0005777">
    <property type="term" value="C:peroxisome"/>
    <property type="evidence" value="ECO:0007669"/>
    <property type="project" value="UniProtKB-SubCell"/>
</dbReference>
<dbReference type="GO" id="GO:0000266">
    <property type="term" value="P:mitochondrial fission"/>
    <property type="evidence" value="ECO:0000315"/>
    <property type="project" value="FlyBase"/>
</dbReference>
<dbReference type="GO" id="GO:0016559">
    <property type="term" value="P:peroxisome fission"/>
    <property type="evidence" value="ECO:0000250"/>
    <property type="project" value="FlyBase"/>
</dbReference>
<dbReference type="GO" id="GO:0009306">
    <property type="term" value="P:protein secretion"/>
    <property type="evidence" value="ECO:0000315"/>
    <property type="project" value="FlyBase"/>
</dbReference>
<dbReference type="InterPro" id="IPR039433">
    <property type="entry name" value="Mff-like_dom"/>
</dbReference>
<dbReference type="InterPro" id="IPR008518">
    <property type="entry name" value="Mff/Tango-11"/>
</dbReference>
<dbReference type="PANTHER" id="PTHR16501">
    <property type="entry name" value="TRANSPORT AND GOLGI ORGANIZATION PROTEIN 11"/>
    <property type="match status" value="1"/>
</dbReference>
<dbReference type="PANTHER" id="PTHR16501:SF6">
    <property type="entry name" value="TRANSPORT AND GOLGI ORGANIZATION PROTEIN 11"/>
    <property type="match status" value="1"/>
</dbReference>
<dbReference type="Pfam" id="PF05644">
    <property type="entry name" value="Miff"/>
    <property type="match status" value="1"/>
</dbReference>
<proteinExistence type="evidence at protein level"/>
<comment type="function">
    <text evidence="1">May play a role in mitochondrial and peroxisomal fission.</text>
</comment>
<comment type="subcellular location">
    <subcellularLocation>
        <location evidence="4">Endoplasmic reticulum membrane</location>
        <topology evidence="4">Single-pass type IV membrane protein</topology>
    </subcellularLocation>
    <subcellularLocation>
        <location evidence="1">Mitochondrion outer membrane</location>
        <topology evidence="1">Single-pass type IV membrane protein</topology>
    </subcellularLocation>
    <subcellularLocation>
        <location evidence="1">Peroxisome</location>
    </subcellularLocation>
</comment>
<comment type="similarity">
    <text evidence="6">Belongs to the Tango11 family.</text>
</comment>
<reference key="1">
    <citation type="journal article" date="2000" name="Science">
        <title>The genome sequence of Drosophila melanogaster.</title>
        <authorList>
            <person name="Adams M.D."/>
            <person name="Celniker S.E."/>
            <person name="Holt R.A."/>
            <person name="Evans C.A."/>
            <person name="Gocayne J.D."/>
            <person name="Amanatides P.G."/>
            <person name="Scherer S.E."/>
            <person name="Li P.W."/>
            <person name="Hoskins R.A."/>
            <person name="Galle R.F."/>
            <person name="George R.A."/>
            <person name="Lewis S.E."/>
            <person name="Richards S."/>
            <person name="Ashburner M."/>
            <person name="Henderson S.N."/>
            <person name="Sutton G.G."/>
            <person name="Wortman J.R."/>
            <person name="Yandell M.D."/>
            <person name="Zhang Q."/>
            <person name="Chen L.X."/>
            <person name="Brandon R.C."/>
            <person name="Rogers Y.-H.C."/>
            <person name="Blazej R.G."/>
            <person name="Champe M."/>
            <person name="Pfeiffer B.D."/>
            <person name="Wan K.H."/>
            <person name="Doyle C."/>
            <person name="Baxter E.G."/>
            <person name="Helt G."/>
            <person name="Nelson C.R."/>
            <person name="Miklos G.L.G."/>
            <person name="Abril J.F."/>
            <person name="Agbayani A."/>
            <person name="An H.-J."/>
            <person name="Andrews-Pfannkoch C."/>
            <person name="Baldwin D."/>
            <person name="Ballew R.M."/>
            <person name="Basu A."/>
            <person name="Baxendale J."/>
            <person name="Bayraktaroglu L."/>
            <person name="Beasley E.M."/>
            <person name="Beeson K.Y."/>
            <person name="Benos P.V."/>
            <person name="Berman B.P."/>
            <person name="Bhandari D."/>
            <person name="Bolshakov S."/>
            <person name="Borkova D."/>
            <person name="Botchan M.R."/>
            <person name="Bouck J."/>
            <person name="Brokstein P."/>
            <person name="Brottier P."/>
            <person name="Burtis K.C."/>
            <person name="Busam D.A."/>
            <person name="Butler H."/>
            <person name="Cadieu E."/>
            <person name="Center A."/>
            <person name="Chandra I."/>
            <person name="Cherry J.M."/>
            <person name="Cawley S."/>
            <person name="Dahlke C."/>
            <person name="Davenport L.B."/>
            <person name="Davies P."/>
            <person name="de Pablos B."/>
            <person name="Delcher A."/>
            <person name="Deng Z."/>
            <person name="Mays A.D."/>
            <person name="Dew I."/>
            <person name="Dietz S.M."/>
            <person name="Dodson K."/>
            <person name="Doup L.E."/>
            <person name="Downes M."/>
            <person name="Dugan-Rocha S."/>
            <person name="Dunkov B.C."/>
            <person name="Dunn P."/>
            <person name="Durbin K.J."/>
            <person name="Evangelista C.C."/>
            <person name="Ferraz C."/>
            <person name="Ferriera S."/>
            <person name="Fleischmann W."/>
            <person name="Fosler C."/>
            <person name="Gabrielian A.E."/>
            <person name="Garg N.S."/>
            <person name="Gelbart W.M."/>
            <person name="Glasser K."/>
            <person name="Glodek A."/>
            <person name="Gong F."/>
            <person name="Gorrell J.H."/>
            <person name="Gu Z."/>
            <person name="Guan P."/>
            <person name="Harris M."/>
            <person name="Harris N.L."/>
            <person name="Harvey D.A."/>
            <person name="Heiman T.J."/>
            <person name="Hernandez J.R."/>
            <person name="Houck J."/>
            <person name="Hostin D."/>
            <person name="Houston K.A."/>
            <person name="Howland T.J."/>
            <person name="Wei M.-H."/>
            <person name="Ibegwam C."/>
            <person name="Jalali M."/>
            <person name="Kalush F."/>
            <person name="Karpen G.H."/>
            <person name="Ke Z."/>
            <person name="Kennison J.A."/>
            <person name="Ketchum K.A."/>
            <person name="Kimmel B.E."/>
            <person name="Kodira C.D."/>
            <person name="Kraft C.L."/>
            <person name="Kravitz S."/>
            <person name="Kulp D."/>
            <person name="Lai Z."/>
            <person name="Lasko P."/>
            <person name="Lei Y."/>
            <person name="Levitsky A.A."/>
            <person name="Li J.H."/>
            <person name="Li Z."/>
            <person name="Liang Y."/>
            <person name="Lin X."/>
            <person name="Liu X."/>
            <person name="Mattei B."/>
            <person name="McIntosh T.C."/>
            <person name="McLeod M.P."/>
            <person name="McPherson D."/>
            <person name="Merkulov G."/>
            <person name="Milshina N.V."/>
            <person name="Mobarry C."/>
            <person name="Morris J."/>
            <person name="Moshrefi A."/>
            <person name="Mount S.M."/>
            <person name="Moy M."/>
            <person name="Murphy B."/>
            <person name="Murphy L."/>
            <person name="Muzny D.M."/>
            <person name="Nelson D.L."/>
            <person name="Nelson D.R."/>
            <person name="Nelson K.A."/>
            <person name="Nixon K."/>
            <person name="Nusskern D.R."/>
            <person name="Pacleb J.M."/>
            <person name="Palazzolo M."/>
            <person name="Pittman G.S."/>
            <person name="Pan S."/>
            <person name="Pollard J."/>
            <person name="Puri V."/>
            <person name="Reese M.G."/>
            <person name="Reinert K."/>
            <person name="Remington K."/>
            <person name="Saunders R.D.C."/>
            <person name="Scheeler F."/>
            <person name="Shen H."/>
            <person name="Shue B.C."/>
            <person name="Siden-Kiamos I."/>
            <person name="Simpson M."/>
            <person name="Skupski M.P."/>
            <person name="Smith T.J."/>
            <person name="Spier E."/>
            <person name="Spradling A.C."/>
            <person name="Stapleton M."/>
            <person name="Strong R."/>
            <person name="Sun E."/>
            <person name="Svirskas R."/>
            <person name="Tector C."/>
            <person name="Turner R."/>
            <person name="Venter E."/>
            <person name="Wang A.H."/>
            <person name="Wang X."/>
            <person name="Wang Z.-Y."/>
            <person name="Wassarman D.A."/>
            <person name="Weinstock G.M."/>
            <person name="Weissenbach J."/>
            <person name="Williams S.M."/>
            <person name="Woodage T."/>
            <person name="Worley K.C."/>
            <person name="Wu D."/>
            <person name="Yang S."/>
            <person name="Yao Q.A."/>
            <person name="Ye J."/>
            <person name="Yeh R.-F."/>
            <person name="Zaveri J.S."/>
            <person name="Zhan M."/>
            <person name="Zhang G."/>
            <person name="Zhao Q."/>
            <person name="Zheng L."/>
            <person name="Zheng X.H."/>
            <person name="Zhong F.N."/>
            <person name="Zhong W."/>
            <person name="Zhou X."/>
            <person name="Zhu S.C."/>
            <person name="Zhu X."/>
            <person name="Smith H.O."/>
            <person name="Gibbs R.A."/>
            <person name="Myers E.W."/>
            <person name="Rubin G.M."/>
            <person name="Venter J.C."/>
        </authorList>
    </citation>
    <scope>NUCLEOTIDE SEQUENCE [LARGE SCALE GENOMIC DNA]</scope>
    <source>
        <strain>Berkeley</strain>
    </source>
</reference>
<reference key="2">
    <citation type="journal article" date="2002" name="Genome Biol.">
        <title>Annotation of the Drosophila melanogaster euchromatic genome: a systematic review.</title>
        <authorList>
            <person name="Misra S."/>
            <person name="Crosby M.A."/>
            <person name="Mungall C.J."/>
            <person name="Matthews B.B."/>
            <person name="Campbell K.S."/>
            <person name="Hradecky P."/>
            <person name="Huang Y."/>
            <person name="Kaminker J.S."/>
            <person name="Millburn G.H."/>
            <person name="Prochnik S.E."/>
            <person name="Smith C.D."/>
            <person name="Tupy J.L."/>
            <person name="Whitfield E.J."/>
            <person name="Bayraktaroglu L."/>
            <person name="Berman B.P."/>
            <person name="Bettencourt B.R."/>
            <person name="Celniker S.E."/>
            <person name="de Grey A.D.N.J."/>
            <person name="Drysdale R.A."/>
            <person name="Harris N.L."/>
            <person name="Richter J."/>
            <person name="Russo S."/>
            <person name="Schroeder A.J."/>
            <person name="Shu S.Q."/>
            <person name="Stapleton M."/>
            <person name="Yamada C."/>
            <person name="Ashburner M."/>
            <person name="Gelbart W.M."/>
            <person name="Rubin G.M."/>
            <person name="Lewis S.E."/>
        </authorList>
    </citation>
    <scope>GENOME REANNOTATION</scope>
    <source>
        <strain>Berkeley</strain>
    </source>
</reference>
<reference key="3">
    <citation type="journal article" date="2002" name="Genome Biol.">
        <title>A Drosophila full-length cDNA resource.</title>
        <authorList>
            <person name="Stapleton M."/>
            <person name="Carlson J.W."/>
            <person name="Brokstein P."/>
            <person name="Yu C."/>
            <person name="Champe M."/>
            <person name="George R.A."/>
            <person name="Guarin H."/>
            <person name="Kronmiller B."/>
            <person name="Pacleb J.M."/>
            <person name="Park S."/>
            <person name="Wan K.H."/>
            <person name="Rubin G.M."/>
            <person name="Celniker S.E."/>
        </authorList>
    </citation>
    <scope>NUCLEOTIDE SEQUENCE [LARGE SCALE MRNA]</scope>
    <source>
        <strain>Berkeley</strain>
        <tissue>Embryo</tissue>
    </source>
</reference>
<reference key="4">
    <citation type="journal article" date="2006" name="Nature">
        <title>Functional genomics reveals genes involved in protein secretion and Golgi organization.</title>
        <authorList>
            <person name="Bard F."/>
            <person name="Casano L."/>
            <person name="Mallabiabarrena A."/>
            <person name="Wallace E."/>
            <person name="Saito K."/>
            <person name="Kitayama H."/>
            <person name="Guizzunti G."/>
            <person name="Hu Y."/>
            <person name="Wendler F."/>
            <person name="Dasgupta R."/>
            <person name="Perrimon N."/>
            <person name="Malhotra V."/>
        </authorList>
    </citation>
    <scope>SUBCELLULAR LOCATION</scope>
</reference>
<reference key="5">
    <citation type="journal article" date="2008" name="J. Proteome Res.">
        <title>Phosphoproteome analysis of Drosophila melanogaster embryos.</title>
        <authorList>
            <person name="Zhai B."/>
            <person name="Villen J."/>
            <person name="Beausoleil S.A."/>
            <person name="Mintseris J."/>
            <person name="Gygi S.P."/>
        </authorList>
    </citation>
    <scope>PHOSPHORYLATION [LARGE SCALE ANALYSIS] AT SER-127; SER-129; SER-132; SER-133; THR-177; SER-179; SER-182; SER-190; THR-216 AND THR-222</scope>
    <scope>IDENTIFICATION BY MASS SPECTROMETRY</scope>
    <source>
        <tissue>Embryo</tissue>
    </source>
</reference>
<sequence length="277" mass="31541">MVTPQSPTPMFNGLDDDLYSDAKYAHEINDKMRVPKRIKATGEYSNEDLLLSNQNGMISSWNYHDKIDMNVPDRIVVLGHNQHLETRSAPREIQLENSILPKNPSVGLVRVQTPPRIITLTDQHFPSASEESSPIRANGHHLYGNDLDEDADDEEVHATQYVRANGVARMGFQGNDTNSVESDSQLTTGSASKRSQLNQQQHNNLDASMLAHREGTPMGELTPHEEILYLRRQLAKLNRRVLNIEINNEQRTQREKIVYCLGLAYFVLKTIFWLNRN</sequence>
<feature type="chain" id="PRO_0000289192" description="Transport and Golgi organization protein 11">
    <location>
        <begin position="1"/>
        <end position="277"/>
    </location>
</feature>
<feature type="topological domain" description="Cytoplasmic" evidence="2">
    <location>
        <begin position="1"/>
        <end position="256"/>
    </location>
</feature>
<feature type="transmembrane region" description="Helical; Anchor for type IV membrane protein" evidence="2">
    <location>
        <begin position="257"/>
        <end position="274"/>
    </location>
</feature>
<feature type="topological domain" description="Lumenal" evidence="2">
    <location>
        <begin position="275"/>
        <end position="277"/>
    </location>
</feature>
<feature type="region of interest" description="Disordered" evidence="3">
    <location>
        <begin position="124"/>
        <end position="148"/>
    </location>
</feature>
<feature type="region of interest" description="Disordered" evidence="3">
    <location>
        <begin position="167"/>
        <end position="200"/>
    </location>
</feature>
<feature type="coiled-coil region" evidence="2">
    <location>
        <begin position="225"/>
        <end position="253"/>
    </location>
</feature>
<feature type="compositionally biased region" description="Polar residues" evidence="3">
    <location>
        <begin position="174"/>
        <end position="200"/>
    </location>
</feature>
<feature type="modified residue" description="Phosphoserine" evidence="5">
    <location>
        <position position="127"/>
    </location>
</feature>
<feature type="modified residue" description="Phosphoserine" evidence="5">
    <location>
        <position position="129"/>
    </location>
</feature>
<feature type="modified residue" description="Phosphoserine" evidence="5">
    <location>
        <position position="132"/>
    </location>
</feature>
<feature type="modified residue" description="Phosphoserine" evidence="5">
    <location>
        <position position="133"/>
    </location>
</feature>
<feature type="modified residue" description="Phosphothreonine" evidence="5">
    <location>
        <position position="177"/>
    </location>
</feature>
<feature type="modified residue" description="Phosphoserine" evidence="5">
    <location>
        <position position="179"/>
    </location>
</feature>
<feature type="modified residue" description="Phosphoserine" evidence="5">
    <location>
        <position position="182"/>
    </location>
</feature>
<feature type="modified residue" description="Phosphoserine" evidence="5">
    <location>
        <position position="190"/>
    </location>
</feature>
<feature type="modified residue" description="Phosphothreonine" evidence="5">
    <location>
        <position position="216"/>
    </location>
</feature>
<feature type="modified residue" description="Phosphothreonine" evidence="5">
    <location>
        <position position="222"/>
    </location>
</feature>